<name>PROB_METMA</name>
<reference key="1">
    <citation type="journal article" date="2002" name="J. Mol. Microbiol. Biotechnol.">
        <title>The genome of Methanosarcina mazei: evidence for lateral gene transfer between Bacteria and Archaea.</title>
        <authorList>
            <person name="Deppenmeier U."/>
            <person name="Johann A."/>
            <person name="Hartsch T."/>
            <person name="Merkl R."/>
            <person name="Schmitz R.A."/>
            <person name="Martinez-Arias R."/>
            <person name="Henne A."/>
            <person name="Wiezer A."/>
            <person name="Baeumer S."/>
            <person name="Jacobi C."/>
            <person name="Brueggemann H."/>
            <person name="Lienard T."/>
            <person name="Christmann A."/>
            <person name="Boemecke M."/>
            <person name="Steckel S."/>
            <person name="Bhattacharyya A."/>
            <person name="Lykidis A."/>
            <person name="Overbeek R."/>
            <person name="Klenk H.-P."/>
            <person name="Gunsalus R.P."/>
            <person name="Fritz H.-J."/>
            <person name="Gottschalk G."/>
        </authorList>
    </citation>
    <scope>NUCLEOTIDE SEQUENCE [LARGE SCALE GENOMIC DNA]</scope>
    <source>
        <strain>ATCC BAA-159 / DSM 3647 / Goe1 / Go1 / JCM 11833 / OCM 88</strain>
    </source>
</reference>
<gene>
    <name evidence="1" type="primary">proB</name>
    <name type="ordered locus">MM_0818</name>
</gene>
<keyword id="KW-0028">Amino-acid biosynthesis</keyword>
<keyword id="KW-0067">ATP-binding</keyword>
<keyword id="KW-0963">Cytoplasm</keyword>
<keyword id="KW-0418">Kinase</keyword>
<keyword id="KW-0547">Nucleotide-binding</keyword>
<keyword id="KW-0641">Proline biosynthesis</keyword>
<keyword id="KW-0808">Transferase</keyword>
<dbReference type="EC" id="2.7.2.11" evidence="1"/>
<dbReference type="EMBL" id="AE008384">
    <property type="protein sequence ID" value="AAM30514.1"/>
    <property type="molecule type" value="Genomic_DNA"/>
</dbReference>
<dbReference type="RefSeq" id="WP_011032768.1">
    <property type="nucleotide sequence ID" value="NC_003901.1"/>
</dbReference>
<dbReference type="SMR" id="Q8PYP3"/>
<dbReference type="GeneID" id="66137785"/>
<dbReference type="KEGG" id="mma:MM_0818"/>
<dbReference type="PATRIC" id="fig|192952.21.peg.970"/>
<dbReference type="eggNOG" id="arCOG00864">
    <property type="taxonomic scope" value="Archaea"/>
</dbReference>
<dbReference type="HOGENOM" id="CLU_025400_2_0_2"/>
<dbReference type="UniPathway" id="UPA00098">
    <property type="reaction ID" value="UER00359"/>
</dbReference>
<dbReference type="Proteomes" id="UP000000595">
    <property type="component" value="Chromosome"/>
</dbReference>
<dbReference type="GO" id="GO:0005829">
    <property type="term" value="C:cytosol"/>
    <property type="evidence" value="ECO:0007669"/>
    <property type="project" value="TreeGrafter"/>
</dbReference>
<dbReference type="GO" id="GO:0005524">
    <property type="term" value="F:ATP binding"/>
    <property type="evidence" value="ECO:0007669"/>
    <property type="project" value="UniProtKB-KW"/>
</dbReference>
<dbReference type="GO" id="GO:0004349">
    <property type="term" value="F:glutamate 5-kinase activity"/>
    <property type="evidence" value="ECO:0007669"/>
    <property type="project" value="UniProtKB-UniRule"/>
</dbReference>
<dbReference type="GO" id="GO:0003723">
    <property type="term" value="F:RNA binding"/>
    <property type="evidence" value="ECO:0007669"/>
    <property type="project" value="InterPro"/>
</dbReference>
<dbReference type="GO" id="GO:0055129">
    <property type="term" value="P:L-proline biosynthetic process"/>
    <property type="evidence" value="ECO:0007669"/>
    <property type="project" value="UniProtKB-UniRule"/>
</dbReference>
<dbReference type="CDD" id="cd04242">
    <property type="entry name" value="AAK_G5K_ProB"/>
    <property type="match status" value="1"/>
</dbReference>
<dbReference type="CDD" id="cd21157">
    <property type="entry name" value="PUA_G5K"/>
    <property type="match status" value="1"/>
</dbReference>
<dbReference type="FunFam" id="3.40.1160.10:FF:000050">
    <property type="entry name" value="Glutamate 5-kinase"/>
    <property type="match status" value="1"/>
</dbReference>
<dbReference type="FunFam" id="3.40.1160.10:FF:000053">
    <property type="entry name" value="Glutamate 5-kinase"/>
    <property type="match status" value="1"/>
</dbReference>
<dbReference type="Gene3D" id="3.40.1160.10">
    <property type="entry name" value="Acetylglutamate kinase-like"/>
    <property type="match status" value="2"/>
</dbReference>
<dbReference type="Gene3D" id="2.30.130.10">
    <property type="entry name" value="PUA domain"/>
    <property type="match status" value="1"/>
</dbReference>
<dbReference type="HAMAP" id="MF_00456">
    <property type="entry name" value="ProB"/>
    <property type="match status" value="1"/>
</dbReference>
<dbReference type="InterPro" id="IPR036393">
    <property type="entry name" value="AceGlu_kinase-like_sf"/>
</dbReference>
<dbReference type="InterPro" id="IPR001048">
    <property type="entry name" value="Asp/Glu/Uridylate_kinase"/>
</dbReference>
<dbReference type="InterPro" id="IPR041739">
    <property type="entry name" value="G5K_ProB"/>
</dbReference>
<dbReference type="InterPro" id="IPR001057">
    <property type="entry name" value="Glu/AcGlu_kinase"/>
</dbReference>
<dbReference type="InterPro" id="IPR011529">
    <property type="entry name" value="Glu_5kinase"/>
</dbReference>
<dbReference type="InterPro" id="IPR005715">
    <property type="entry name" value="Glu_5kinase/COase_Synthase"/>
</dbReference>
<dbReference type="InterPro" id="IPR019797">
    <property type="entry name" value="Glutamate_5-kinase_CS"/>
</dbReference>
<dbReference type="InterPro" id="IPR002478">
    <property type="entry name" value="PUA"/>
</dbReference>
<dbReference type="InterPro" id="IPR015947">
    <property type="entry name" value="PUA-like_sf"/>
</dbReference>
<dbReference type="InterPro" id="IPR036974">
    <property type="entry name" value="PUA_sf"/>
</dbReference>
<dbReference type="NCBIfam" id="TIGR01027">
    <property type="entry name" value="proB"/>
    <property type="match status" value="1"/>
</dbReference>
<dbReference type="PANTHER" id="PTHR43654">
    <property type="entry name" value="GLUTAMATE 5-KINASE"/>
    <property type="match status" value="1"/>
</dbReference>
<dbReference type="PANTHER" id="PTHR43654:SF3">
    <property type="entry name" value="GLUTAMATE 5-KINASE"/>
    <property type="match status" value="1"/>
</dbReference>
<dbReference type="Pfam" id="PF00696">
    <property type="entry name" value="AA_kinase"/>
    <property type="match status" value="1"/>
</dbReference>
<dbReference type="Pfam" id="PF01472">
    <property type="entry name" value="PUA"/>
    <property type="match status" value="1"/>
</dbReference>
<dbReference type="PIRSF" id="PIRSF000729">
    <property type="entry name" value="GK"/>
    <property type="match status" value="1"/>
</dbReference>
<dbReference type="PRINTS" id="PR00474">
    <property type="entry name" value="GLU5KINASE"/>
</dbReference>
<dbReference type="SMART" id="SM00359">
    <property type="entry name" value="PUA"/>
    <property type="match status" value="1"/>
</dbReference>
<dbReference type="SUPFAM" id="SSF53633">
    <property type="entry name" value="Carbamate kinase-like"/>
    <property type="match status" value="1"/>
</dbReference>
<dbReference type="SUPFAM" id="SSF88697">
    <property type="entry name" value="PUA domain-like"/>
    <property type="match status" value="1"/>
</dbReference>
<dbReference type="PROSITE" id="PS00902">
    <property type="entry name" value="GLUTAMATE_5_KINASE"/>
    <property type="match status" value="1"/>
</dbReference>
<dbReference type="PROSITE" id="PS50890">
    <property type="entry name" value="PUA"/>
    <property type="match status" value="1"/>
</dbReference>
<organism>
    <name type="scientific">Methanosarcina mazei (strain ATCC BAA-159 / DSM 3647 / Goe1 / Go1 / JCM 11833 / OCM 88)</name>
    <name type="common">Methanosarcina frisia</name>
    <dbReference type="NCBI Taxonomy" id="192952"/>
    <lineage>
        <taxon>Archaea</taxon>
        <taxon>Methanobacteriati</taxon>
        <taxon>Methanobacteriota</taxon>
        <taxon>Stenosarchaea group</taxon>
        <taxon>Methanomicrobia</taxon>
        <taxon>Methanosarcinales</taxon>
        <taxon>Methanosarcinaceae</taxon>
        <taxon>Methanosarcina</taxon>
    </lineage>
</organism>
<sequence>MTEREQFFRDVNKIVIKIGTSSITRKGCDHTRENCNIDPAFMESIAFQVSELRKQGKEVIIVSSGAIGVGLNELGIAPKPREIPIRQAAAAVGQSMLMQDWSRAFSRYGMKVAQILLTYEFYSDRVTYLNLRNSISTLLEYGVVPIINENDCTCTNEIEAIFGDNDKLSAMVASKIDADLLIILSDIDGLFDRNPKTHIDAKLLTIVKKITPEIESYGGDPTSFKGVGGMRTKIKAAKICSMAGCYVVIANSDVEDVILKIASGEEIGTLFLAERHIQKNRARWIILARASGTVRVDAGAKAAVLGKNSLLPAGVVDVEGTFDRGDVVKLECDGKIFAKGITDYTSEELIKIKGVHTDQIENVLGYSNYNNVIKKENIGILEELN</sequence>
<accession>Q8PYP3</accession>
<comment type="function">
    <text evidence="1">Catalyzes the transfer of a phosphate group to glutamate to form L-glutamate 5-phosphate.</text>
</comment>
<comment type="catalytic activity">
    <reaction evidence="1">
        <text>L-glutamate + ATP = L-glutamyl 5-phosphate + ADP</text>
        <dbReference type="Rhea" id="RHEA:14877"/>
        <dbReference type="ChEBI" id="CHEBI:29985"/>
        <dbReference type="ChEBI" id="CHEBI:30616"/>
        <dbReference type="ChEBI" id="CHEBI:58274"/>
        <dbReference type="ChEBI" id="CHEBI:456216"/>
        <dbReference type="EC" id="2.7.2.11"/>
    </reaction>
</comment>
<comment type="pathway">
    <text evidence="1">Amino-acid biosynthesis; L-proline biosynthesis; L-glutamate 5-semialdehyde from L-glutamate: step 1/2.</text>
</comment>
<comment type="subcellular location">
    <subcellularLocation>
        <location evidence="1">Cytoplasm</location>
    </subcellularLocation>
</comment>
<comment type="similarity">
    <text evidence="1">Belongs to the glutamate 5-kinase family.</text>
</comment>
<proteinExistence type="inferred from homology"/>
<evidence type="ECO:0000255" key="1">
    <source>
        <dbReference type="HAMAP-Rule" id="MF_00456"/>
    </source>
</evidence>
<protein>
    <recommendedName>
        <fullName evidence="1">Glutamate 5-kinase</fullName>
        <ecNumber evidence="1">2.7.2.11</ecNumber>
    </recommendedName>
    <alternativeName>
        <fullName evidence="1">Gamma-glutamyl kinase</fullName>
        <shortName evidence="1">GK</shortName>
    </alternativeName>
</protein>
<feature type="chain" id="PRO_0000109766" description="Glutamate 5-kinase">
    <location>
        <begin position="1"/>
        <end position="385"/>
    </location>
</feature>
<feature type="domain" description="PUA" evidence="1">
    <location>
        <begin position="291"/>
        <end position="367"/>
    </location>
</feature>
<feature type="binding site" evidence="1">
    <location>
        <position position="17"/>
    </location>
    <ligand>
        <name>ATP</name>
        <dbReference type="ChEBI" id="CHEBI:30616"/>
    </ligand>
</feature>
<feature type="binding site" evidence="1">
    <location>
        <position position="64"/>
    </location>
    <ligand>
        <name>substrate</name>
    </ligand>
</feature>
<feature type="binding site" evidence="1">
    <location>
        <position position="151"/>
    </location>
    <ligand>
        <name>substrate</name>
    </ligand>
</feature>
<feature type="binding site" evidence="1">
    <location>
        <position position="165"/>
    </location>
    <ligand>
        <name>substrate</name>
    </ligand>
</feature>
<feature type="binding site" evidence="1">
    <location>
        <begin position="185"/>
        <end position="186"/>
    </location>
    <ligand>
        <name>ATP</name>
        <dbReference type="ChEBI" id="CHEBI:30616"/>
    </ligand>
</feature>